<reference key="1">
    <citation type="journal article" date="2010" name="Genome Biol.">
        <title>Structure and dynamics of the pan-genome of Streptococcus pneumoniae and closely related species.</title>
        <authorList>
            <person name="Donati C."/>
            <person name="Hiller N.L."/>
            <person name="Tettelin H."/>
            <person name="Muzzi A."/>
            <person name="Croucher N.J."/>
            <person name="Angiuoli S.V."/>
            <person name="Oggioni M."/>
            <person name="Dunning Hotopp J.C."/>
            <person name="Hu F.Z."/>
            <person name="Riley D.R."/>
            <person name="Covacci A."/>
            <person name="Mitchell T.J."/>
            <person name="Bentley S.D."/>
            <person name="Kilian M."/>
            <person name="Ehrlich G.D."/>
            <person name="Rappuoli R."/>
            <person name="Moxon E.R."/>
            <person name="Masignani V."/>
        </authorList>
    </citation>
    <scope>NUCLEOTIDE SEQUENCE [LARGE SCALE GENOMIC DNA]</scope>
    <source>
        <strain>P1031</strain>
    </source>
</reference>
<dbReference type="EC" id="1.17.1.8" evidence="1"/>
<dbReference type="EMBL" id="CP000920">
    <property type="protein sequence ID" value="ACO20415.1"/>
    <property type="molecule type" value="Genomic_DNA"/>
</dbReference>
<dbReference type="RefSeq" id="WP_000027895.1">
    <property type="nucleotide sequence ID" value="NC_012467.1"/>
</dbReference>
<dbReference type="SMR" id="C1CLQ6"/>
<dbReference type="GeneID" id="45653205"/>
<dbReference type="KEGG" id="spp:SPP_1580"/>
<dbReference type="HOGENOM" id="CLU_047479_0_1_9"/>
<dbReference type="UniPathway" id="UPA00034">
    <property type="reaction ID" value="UER00018"/>
</dbReference>
<dbReference type="GO" id="GO:0005829">
    <property type="term" value="C:cytosol"/>
    <property type="evidence" value="ECO:0007669"/>
    <property type="project" value="TreeGrafter"/>
</dbReference>
<dbReference type="GO" id="GO:0008839">
    <property type="term" value="F:4-hydroxy-tetrahydrodipicolinate reductase"/>
    <property type="evidence" value="ECO:0007669"/>
    <property type="project" value="UniProtKB-EC"/>
</dbReference>
<dbReference type="GO" id="GO:0051287">
    <property type="term" value="F:NAD binding"/>
    <property type="evidence" value="ECO:0007669"/>
    <property type="project" value="UniProtKB-UniRule"/>
</dbReference>
<dbReference type="GO" id="GO:0050661">
    <property type="term" value="F:NADP binding"/>
    <property type="evidence" value="ECO:0007669"/>
    <property type="project" value="UniProtKB-UniRule"/>
</dbReference>
<dbReference type="GO" id="GO:0016726">
    <property type="term" value="F:oxidoreductase activity, acting on CH or CH2 groups, NAD or NADP as acceptor"/>
    <property type="evidence" value="ECO:0007669"/>
    <property type="project" value="UniProtKB-UniRule"/>
</dbReference>
<dbReference type="GO" id="GO:0019877">
    <property type="term" value="P:diaminopimelate biosynthetic process"/>
    <property type="evidence" value="ECO:0007669"/>
    <property type="project" value="UniProtKB-UniRule"/>
</dbReference>
<dbReference type="GO" id="GO:0009089">
    <property type="term" value="P:lysine biosynthetic process via diaminopimelate"/>
    <property type="evidence" value="ECO:0007669"/>
    <property type="project" value="UniProtKB-UniRule"/>
</dbReference>
<dbReference type="CDD" id="cd02274">
    <property type="entry name" value="DHDPR_N"/>
    <property type="match status" value="1"/>
</dbReference>
<dbReference type="FunFam" id="3.30.360.10:FF:000009">
    <property type="entry name" value="4-hydroxy-tetrahydrodipicolinate reductase"/>
    <property type="match status" value="1"/>
</dbReference>
<dbReference type="Gene3D" id="3.30.360.10">
    <property type="entry name" value="Dihydrodipicolinate Reductase, domain 2"/>
    <property type="match status" value="1"/>
</dbReference>
<dbReference type="Gene3D" id="3.40.50.720">
    <property type="entry name" value="NAD(P)-binding Rossmann-like Domain"/>
    <property type="match status" value="1"/>
</dbReference>
<dbReference type="HAMAP" id="MF_00102">
    <property type="entry name" value="DapB"/>
    <property type="match status" value="1"/>
</dbReference>
<dbReference type="InterPro" id="IPR022663">
    <property type="entry name" value="DapB_C"/>
</dbReference>
<dbReference type="InterPro" id="IPR000846">
    <property type="entry name" value="DapB_N"/>
</dbReference>
<dbReference type="InterPro" id="IPR022664">
    <property type="entry name" value="DapB_N_CS"/>
</dbReference>
<dbReference type="InterPro" id="IPR023940">
    <property type="entry name" value="DHDPR_bac"/>
</dbReference>
<dbReference type="InterPro" id="IPR036291">
    <property type="entry name" value="NAD(P)-bd_dom_sf"/>
</dbReference>
<dbReference type="NCBIfam" id="TIGR00036">
    <property type="entry name" value="dapB"/>
    <property type="match status" value="1"/>
</dbReference>
<dbReference type="PANTHER" id="PTHR20836:SF0">
    <property type="entry name" value="4-HYDROXY-TETRAHYDRODIPICOLINATE REDUCTASE 1, CHLOROPLASTIC-RELATED"/>
    <property type="match status" value="1"/>
</dbReference>
<dbReference type="PANTHER" id="PTHR20836">
    <property type="entry name" value="DIHYDRODIPICOLINATE REDUCTASE"/>
    <property type="match status" value="1"/>
</dbReference>
<dbReference type="Pfam" id="PF05173">
    <property type="entry name" value="DapB_C"/>
    <property type="match status" value="1"/>
</dbReference>
<dbReference type="Pfam" id="PF01113">
    <property type="entry name" value="DapB_N"/>
    <property type="match status" value="1"/>
</dbReference>
<dbReference type="PIRSF" id="PIRSF000161">
    <property type="entry name" value="DHPR"/>
    <property type="match status" value="1"/>
</dbReference>
<dbReference type="SUPFAM" id="SSF55347">
    <property type="entry name" value="Glyceraldehyde-3-phosphate dehydrogenase-like, C-terminal domain"/>
    <property type="match status" value="1"/>
</dbReference>
<dbReference type="SUPFAM" id="SSF51735">
    <property type="entry name" value="NAD(P)-binding Rossmann-fold domains"/>
    <property type="match status" value="1"/>
</dbReference>
<dbReference type="PROSITE" id="PS01298">
    <property type="entry name" value="DAPB"/>
    <property type="match status" value="1"/>
</dbReference>
<evidence type="ECO:0000255" key="1">
    <source>
        <dbReference type="HAMAP-Rule" id="MF_00102"/>
    </source>
</evidence>
<evidence type="ECO:0000305" key="2"/>
<organism>
    <name type="scientific">Streptococcus pneumoniae (strain P1031)</name>
    <dbReference type="NCBI Taxonomy" id="488223"/>
    <lineage>
        <taxon>Bacteria</taxon>
        <taxon>Bacillati</taxon>
        <taxon>Bacillota</taxon>
        <taxon>Bacilli</taxon>
        <taxon>Lactobacillales</taxon>
        <taxon>Streptococcaceae</taxon>
        <taxon>Streptococcus</taxon>
    </lineage>
</organism>
<feature type="chain" id="PRO_1000189759" description="4-hydroxy-tetrahydrodipicolinate reductase">
    <location>
        <begin position="1"/>
        <end position="255"/>
    </location>
</feature>
<feature type="active site" description="Proton donor/acceptor" evidence="1">
    <location>
        <position position="145"/>
    </location>
</feature>
<feature type="active site" description="Proton donor" evidence="1">
    <location>
        <position position="149"/>
    </location>
</feature>
<feature type="binding site" evidence="1">
    <location>
        <begin position="9"/>
        <end position="14"/>
    </location>
    <ligand>
        <name>NAD(+)</name>
        <dbReference type="ChEBI" id="CHEBI:57540"/>
    </ligand>
</feature>
<feature type="binding site" evidence="1">
    <location>
        <position position="35"/>
    </location>
    <ligand>
        <name>NAD(+)</name>
        <dbReference type="ChEBI" id="CHEBI:57540"/>
    </ligand>
</feature>
<feature type="binding site" evidence="1">
    <location>
        <begin position="89"/>
        <end position="91"/>
    </location>
    <ligand>
        <name>NAD(+)</name>
        <dbReference type="ChEBI" id="CHEBI:57540"/>
    </ligand>
</feature>
<feature type="binding site" evidence="1">
    <location>
        <begin position="115"/>
        <end position="118"/>
    </location>
    <ligand>
        <name>NAD(+)</name>
        <dbReference type="ChEBI" id="CHEBI:57540"/>
    </ligand>
</feature>
<feature type="binding site" evidence="1">
    <location>
        <position position="146"/>
    </location>
    <ligand>
        <name>(S)-2,3,4,5-tetrahydrodipicolinate</name>
        <dbReference type="ChEBI" id="CHEBI:16845"/>
    </ligand>
</feature>
<feature type="binding site" evidence="1">
    <location>
        <begin position="155"/>
        <end position="156"/>
    </location>
    <ligand>
        <name>(S)-2,3,4,5-tetrahydrodipicolinate</name>
        <dbReference type="ChEBI" id="CHEBI:16845"/>
    </ligand>
</feature>
<sequence>MSIRVIIAGFKGKMGQAACQMVLTDPDLDLVAVLDPFESESEWQGIPVFKDKADLACFEADVWVDFTTPAVAYENTRFALENGFAPVVGTTGFTSEEIAELKEFSRTQDLGGLIAPNFALGAVLLMQFATQAAKYFPNVEIIELHHDKKKDAPSGTAIKTAELMAEIRESIQQGAADEEELIAGARGADFDGMRIHSVRLPGLVAHQEVIFGNQGEGLTLRHDSYDRISFMTGVNLGIKEVVKRHELVYGLEHLL</sequence>
<gene>
    <name evidence="1" type="primary">dapB</name>
    <name type="ordered locus">SPP_1580</name>
</gene>
<accession>C1CLQ6</accession>
<name>DAPB_STRZP</name>
<protein>
    <recommendedName>
        <fullName evidence="1">4-hydroxy-tetrahydrodipicolinate reductase</fullName>
        <shortName evidence="1">HTPA reductase</shortName>
        <ecNumber evidence="1">1.17.1.8</ecNumber>
    </recommendedName>
</protein>
<proteinExistence type="inferred from homology"/>
<comment type="function">
    <text evidence="1">Catalyzes the conversion of 4-hydroxy-tetrahydrodipicolinate (HTPA) to tetrahydrodipicolinate.</text>
</comment>
<comment type="catalytic activity">
    <reaction evidence="1">
        <text>(S)-2,3,4,5-tetrahydrodipicolinate + NAD(+) + H2O = (2S,4S)-4-hydroxy-2,3,4,5-tetrahydrodipicolinate + NADH + H(+)</text>
        <dbReference type="Rhea" id="RHEA:35323"/>
        <dbReference type="ChEBI" id="CHEBI:15377"/>
        <dbReference type="ChEBI" id="CHEBI:15378"/>
        <dbReference type="ChEBI" id="CHEBI:16845"/>
        <dbReference type="ChEBI" id="CHEBI:57540"/>
        <dbReference type="ChEBI" id="CHEBI:57945"/>
        <dbReference type="ChEBI" id="CHEBI:67139"/>
        <dbReference type="EC" id="1.17.1.8"/>
    </reaction>
</comment>
<comment type="catalytic activity">
    <reaction evidence="1">
        <text>(S)-2,3,4,5-tetrahydrodipicolinate + NADP(+) + H2O = (2S,4S)-4-hydroxy-2,3,4,5-tetrahydrodipicolinate + NADPH + H(+)</text>
        <dbReference type="Rhea" id="RHEA:35331"/>
        <dbReference type="ChEBI" id="CHEBI:15377"/>
        <dbReference type="ChEBI" id="CHEBI:15378"/>
        <dbReference type="ChEBI" id="CHEBI:16845"/>
        <dbReference type="ChEBI" id="CHEBI:57783"/>
        <dbReference type="ChEBI" id="CHEBI:58349"/>
        <dbReference type="ChEBI" id="CHEBI:67139"/>
        <dbReference type="EC" id="1.17.1.8"/>
    </reaction>
</comment>
<comment type="pathway">
    <text evidence="1">Amino-acid biosynthesis; L-lysine biosynthesis via DAP pathway; (S)-tetrahydrodipicolinate from L-aspartate: step 4/4.</text>
</comment>
<comment type="subcellular location">
    <subcellularLocation>
        <location evidence="1">Cytoplasm</location>
    </subcellularLocation>
</comment>
<comment type="similarity">
    <text evidence="1">Belongs to the DapB family.</text>
</comment>
<comment type="caution">
    <text evidence="2">Was originally thought to be a dihydrodipicolinate reductase (DHDPR), catalyzing the conversion of dihydrodipicolinate to tetrahydrodipicolinate. However, it was shown in E.coli that the substrate of the enzymatic reaction is not dihydrodipicolinate (DHDP) but in fact (2S,4S)-4-hydroxy-2,3,4,5-tetrahydrodipicolinic acid (HTPA), the product released by the DapA-catalyzed reaction.</text>
</comment>
<keyword id="KW-0028">Amino-acid biosynthesis</keyword>
<keyword id="KW-0963">Cytoplasm</keyword>
<keyword id="KW-0220">Diaminopimelate biosynthesis</keyword>
<keyword id="KW-0457">Lysine biosynthesis</keyword>
<keyword id="KW-0520">NAD</keyword>
<keyword id="KW-0521">NADP</keyword>
<keyword id="KW-0560">Oxidoreductase</keyword>